<sequence length="686" mass="78706">MDQSSRRDESYHETHPGSLDPSHQSHPHPHPHPTLHRPNQGGVYYDSPQHGMFQQPYQQHGGFHQQNELQHLREFSDSHDNAFSHHSYQQDRAGVSTLPNNISHAYGGSHPLAESQHSGGPQSGPRIDPNHHPHQDDPHRPSEPLSHPSSTGSHQGTTHQQYHERSHHLNPQQNRDHADTISYRSSTRFYRSHAPFSRQERPHLHADHHHEGHHAHSHHGEHPHHKEQRHYHGDHMHHHIHHRSPSASQLSHKSHSTLATSPSHVGSKSTASGARYTFGARSQIFGKAQSRESLRESASLSEGEDHVQKRKKAQRAHKKAHTGNIFQLLWEKISHLLLGLQQMILSLTQSLGFETFIFIVVCLNTVILVAQTFTELEIRGEWYFMVLDSIFLSIYVLEAVLKLIALGLEYFYDPWNNLDFFIMVMAVLDFVLLQINSLSYSFYNHSLFRILKVFKSMRALRAIRVLRRLSILTSLHEVAGTLSGSLPSITAILTLMFTCLFLFSVVLRALFQDSDPKRFQNIFTTLFTLFTMLTLDDWSLIYIDNRAQGAWYIIPILMIYIVIQYFIFLNLVIAVLVDNFQMALLKGLEKVKLEQAARVHEKLLDDSLTDLNKADANAQMTEEALKMQLIEGMFGNMTVKQRVLHFQFLQLVAAVEQHQQKFRSQAYVIDELVDMAFEAGDDDYGK</sequence>
<accession>Q91ZR5</accession>
<accession>Q4PZC3</accession>
<accession>Q4PZC4</accession>
<accession>Q4PZC5</accession>
<accession>Q4PZC6</accession>
<accession>Q4PZD2</accession>
<evidence type="ECO:0000250" key="1">
    <source>
        <dbReference type="UniProtKB" id="Q8NEC5"/>
    </source>
</evidence>
<evidence type="ECO:0000256" key="2">
    <source>
        <dbReference type="SAM" id="MobiDB-lite"/>
    </source>
</evidence>
<evidence type="ECO:0000269" key="3">
    <source>
    </source>
</evidence>
<evidence type="ECO:0000269" key="4">
    <source>
    </source>
</evidence>
<evidence type="ECO:0000269" key="5">
    <source>
    </source>
</evidence>
<evidence type="ECO:0000269" key="6">
    <source>
    </source>
</evidence>
<evidence type="ECO:0000269" key="7">
    <source>
    </source>
</evidence>
<evidence type="ECO:0000269" key="8">
    <source>
    </source>
</evidence>
<evidence type="ECO:0000269" key="9">
    <source>
    </source>
</evidence>
<evidence type="ECO:0000269" key="10">
    <source>
    </source>
</evidence>
<evidence type="ECO:0000269" key="11">
    <source>
    </source>
</evidence>
<evidence type="ECO:0000269" key="12">
    <source>
    </source>
</evidence>
<evidence type="ECO:0000269" key="13">
    <source>
    </source>
</evidence>
<evidence type="ECO:0000269" key="14">
    <source>
    </source>
</evidence>
<evidence type="ECO:0000269" key="15">
    <source>
    </source>
</evidence>
<evidence type="ECO:0000269" key="16">
    <source>
    </source>
</evidence>
<evidence type="ECO:0000269" key="17">
    <source>
    </source>
</evidence>
<evidence type="ECO:0000305" key="18"/>
<evidence type="ECO:0000305" key="19">
    <source>
    </source>
</evidence>
<evidence type="ECO:0007829" key="20">
    <source>
        <dbReference type="PDB" id="7EEB"/>
    </source>
</evidence>
<dbReference type="EMBL" id="AF407332">
    <property type="protein sequence ID" value="AAL14104.1"/>
    <property type="molecule type" value="mRNA"/>
</dbReference>
<dbReference type="EMBL" id="DQ021482">
    <property type="protein sequence ID" value="AAY63820.1"/>
    <property type="molecule type" value="Genomic_DNA"/>
</dbReference>
<dbReference type="EMBL" id="DQ021483">
    <property type="protein sequence ID" value="AAY63821.1"/>
    <property type="molecule type" value="Genomic_DNA"/>
</dbReference>
<dbReference type="EMBL" id="DQ021484">
    <property type="protein sequence ID" value="AAY63822.1"/>
    <property type="molecule type" value="Genomic_DNA"/>
</dbReference>
<dbReference type="EMBL" id="DQ021485">
    <property type="protein sequence ID" value="AAY63823.1"/>
    <property type="molecule type" value="Genomic_DNA"/>
</dbReference>
<dbReference type="EMBL" id="DQ021486">
    <property type="protein sequence ID" value="AAY63824.1"/>
    <property type="molecule type" value="Genomic_DNA"/>
</dbReference>
<dbReference type="EMBL" id="DQ021488">
    <property type="protein sequence ID" value="AAY63826.1"/>
    <property type="molecule type" value="Genomic_DNA"/>
</dbReference>
<dbReference type="EMBL" id="DQ021489">
    <property type="protein sequence ID" value="AAY63827.1"/>
    <property type="molecule type" value="Genomic_DNA"/>
</dbReference>
<dbReference type="EMBL" id="DQ021490">
    <property type="protein sequence ID" value="AAY63828.1"/>
    <property type="molecule type" value="Genomic_DNA"/>
</dbReference>
<dbReference type="EMBL" id="DQ021491">
    <property type="protein sequence ID" value="AAY63829.1"/>
    <property type="molecule type" value="Genomic_DNA"/>
</dbReference>
<dbReference type="EMBL" id="DQ021492">
    <property type="protein sequence ID" value="AAY63830.1"/>
    <property type="molecule type" value="Genomic_DNA"/>
</dbReference>
<dbReference type="CCDS" id="CCDS29456.1"/>
<dbReference type="RefSeq" id="NP_647462.1">
    <property type="nucleotide sequence ID" value="NM_139301.3"/>
</dbReference>
<dbReference type="PDB" id="7EEB">
    <property type="method" value="EM"/>
    <property type="resolution" value="2.90 A"/>
    <property type="chains" value="A=1-686"/>
</dbReference>
<dbReference type="PDBsum" id="7EEB"/>
<dbReference type="EMDB" id="EMD-31076"/>
<dbReference type="SMR" id="Q91ZR5"/>
<dbReference type="BioGRID" id="230434">
    <property type="interactions" value="7"/>
</dbReference>
<dbReference type="ComplexPortal" id="CPX-9078">
    <property type="entry name" value="CatSpermasome complex, gamma subunit variant 2"/>
</dbReference>
<dbReference type="CORUM" id="Q91ZR5"/>
<dbReference type="DIP" id="DIP-60800N"/>
<dbReference type="FunCoup" id="Q91ZR5">
    <property type="interactions" value="77"/>
</dbReference>
<dbReference type="IntAct" id="Q91ZR5">
    <property type="interactions" value="3"/>
</dbReference>
<dbReference type="STRING" id="10090.ENSMUSP00000045430"/>
<dbReference type="ChEMBL" id="CHEMBL3886121"/>
<dbReference type="GuidetoPHARMACOLOGY" id="388"/>
<dbReference type="TCDB" id="1.A.1.19.3">
    <property type="family name" value="the voltage-gated ion channel (vic) superfamily"/>
</dbReference>
<dbReference type="iPTMnet" id="Q91ZR5"/>
<dbReference type="PhosphoSitePlus" id="Q91ZR5"/>
<dbReference type="jPOST" id="Q91ZR5"/>
<dbReference type="PaxDb" id="10090-ENSMUSP00000045430"/>
<dbReference type="ProteomicsDB" id="285426"/>
<dbReference type="Antibodypedia" id="58041">
    <property type="antibodies" value="122 antibodies from 25 providers"/>
</dbReference>
<dbReference type="DNASU" id="225865"/>
<dbReference type="Ensembl" id="ENSMUST00000043380.5">
    <property type="protein sequence ID" value="ENSMUSP00000045430.4"/>
    <property type="gene ID" value="ENSMUSG00000038498.5"/>
</dbReference>
<dbReference type="GeneID" id="225865"/>
<dbReference type="KEGG" id="mmu:225865"/>
<dbReference type="UCSC" id="uc008gcp.1">
    <property type="organism name" value="mouse"/>
</dbReference>
<dbReference type="AGR" id="MGI:2179947"/>
<dbReference type="CTD" id="117144"/>
<dbReference type="MGI" id="MGI:2179947">
    <property type="gene designation" value="Catsper1"/>
</dbReference>
<dbReference type="VEuPathDB" id="HostDB:ENSMUSG00000038498"/>
<dbReference type="eggNOG" id="KOG2302">
    <property type="taxonomic scope" value="Eukaryota"/>
</dbReference>
<dbReference type="GeneTree" id="ENSGT00940000162437"/>
<dbReference type="HOGENOM" id="CLU_016037_0_0_1"/>
<dbReference type="InParanoid" id="Q91ZR5"/>
<dbReference type="OMA" id="ESQHHQV"/>
<dbReference type="OrthoDB" id="431720at2759"/>
<dbReference type="PhylomeDB" id="Q91ZR5"/>
<dbReference type="TreeFam" id="TF329330"/>
<dbReference type="Reactome" id="R-MMU-1300642">
    <property type="pathway name" value="Sperm Motility And Taxes"/>
</dbReference>
<dbReference type="BioGRID-ORCS" id="225865">
    <property type="hits" value="3 hits in 81 CRISPR screens"/>
</dbReference>
<dbReference type="PRO" id="PR:Q91ZR5"/>
<dbReference type="Proteomes" id="UP000000589">
    <property type="component" value="Chromosome 19"/>
</dbReference>
<dbReference type="RNAct" id="Q91ZR5">
    <property type="molecule type" value="protein"/>
</dbReference>
<dbReference type="Bgee" id="ENSMUSG00000038498">
    <property type="expression patterns" value="Expressed in seminiferous tubule of testis and 3 other cell types or tissues"/>
</dbReference>
<dbReference type="ExpressionAtlas" id="Q91ZR5">
    <property type="expression patterns" value="baseline and differential"/>
</dbReference>
<dbReference type="GO" id="GO:0036128">
    <property type="term" value="C:CatSper complex"/>
    <property type="evidence" value="ECO:0000314"/>
    <property type="project" value="UniProtKB"/>
</dbReference>
<dbReference type="GO" id="GO:0005886">
    <property type="term" value="C:plasma membrane"/>
    <property type="evidence" value="ECO:0000314"/>
    <property type="project" value="MGI"/>
</dbReference>
<dbReference type="GO" id="GO:0097228">
    <property type="term" value="C:sperm principal piece"/>
    <property type="evidence" value="ECO:0000314"/>
    <property type="project" value="UniProtKB"/>
</dbReference>
<dbReference type="GO" id="GO:0005227">
    <property type="term" value="F:calcium-activated cation channel activity"/>
    <property type="evidence" value="ECO:0007669"/>
    <property type="project" value="InterPro"/>
</dbReference>
<dbReference type="GO" id="GO:0005245">
    <property type="term" value="F:voltage-gated calcium channel activity"/>
    <property type="evidence" value="ECO:0000315"/>
    <property type="project" value="MGI"/>
</dbReference>
<dbReference type="GO" id="GO:0006816">
    <property type="term" value="P:calcium ion transport"/>
    <property type="evidence" value="ECO:0000315"/>
    <property type="project" value="MGI"/>
</dbReference>
<dbReference type="GO" id="GO:0030154">
    <property type="term" value="P:cell differentiation"/>
    <property type="evidence" value="ECO:0007669"/>
    <property type="project" value="UniProtKB-KW"/>
</dbReference>
<dbReference type="GO" id="GO:0030317">
    <property type="term" value="P:flagellated sperm motility"/>
    <property type="evidence" value="ECO:0000315"/>
    <property type="project" value="MGI"/>
</dbReference>
<dbReference type="GO" id="GO:0007342">
    <property type="term" value="P:fusion of sperm to egg plasma membrane involved in single fertilization"/>
    <property type="evidence" value="ECO:0000315"/>
    <property type="project" value="MGI"/>
</dbReference>
<dbReference type="GO" id="GO:0051924">
    <property type="term" value="P:regulation of calcium ion transport"/>
    <property type="evidence" value="ECO:0000315"/>
    <property type="project" value="MGI"/>
</dbReference>
<dbReference type="GO" id="GO:0060296">
    <property type="term" value="P:regulation of cilium beat frequency involved in ciliary motility"/>
    <property type="evidence" value="ECO:0000315"/>
    <property type="project" value="MGI"/>
</dbReference>
<dbReference type="GO" id="GO:0007283">
    <property type="term" value="P:spermatogenesis"/>
    <property type="evidence" value="ECO:0000315"/>
    <property type="project" value="MGI"/>
</dbReference>
<dbReference type="FunFam" id="1.20.120.350:FF:000078">
    <property type="entry name" value="Cation channel sperm associated 1"/>
    <property type="match status" value="1"/>
</dbReference>
<dbReference type="FunFam" id="1.10.287.70:FF:000140">
    <property type="entry name" value="cation channel sperm-associated protein 1"/>
    <property type="match status" value="1"/>
</dbReference>
<dbReference type="Gene3D" id="1.10.287.70">
    <property type="match status" value="1"/>
</dbReference>
<dbReference type="Gene3D" id="1.20.120.350">
    <property type="entry name" value="Voltage-gated potassium channels. Chain C"/>
    <property type="match status" value="1"/>
</dbReference>
<dbReference type="InterPro" id="IPR028746">
    <property type="entry name" value="CatSper1"/>
</dbReference>
<dbReference type="InterPro" id="IPR005821">
    <property type="entry name" value="Ion_trans_dom"/>
</dbReference>
<dbReference type="InterPro" id="IPR027359">
    <property type="entry name" value="Volt_channel_dom_sf"/>
</dbReference>
<dbReference type="PANTHER" id="PTHR47193">
    <property type="entry name" value="CATION CHANNEL SPERM-ASSOCIATED PROTEIN 1"/>
    <property type="match status" value="1"/>
</dbReference>
<dbReference type="PANTHER" id="PTHR47193:SF1">
    <property type="entry name" value="CATION CHANNEL SPERM-ASSOCIATED PROTEIN 1"/>
    <property type="match status" value="1"/>
</dbReference>
<dbReference type="Pfam" id="PF00520">
    <property type="entry name" value="Ion_trans"/>
    <property type="match status" value="1"/>
</dbReference>
<dbReference type="SUPFAM" id="SSF81324">
    <property type="entry name" value="Voltage-gated potassium channels"/>
    <property type="match status" value="1"/>
</dbReference>
<name>CTSR1_MOUSE</name>
<feature type="chain" id="PRO_0000295675" description="Cation channel sperm-associated protein 1">
    <location>
        <begin position="1"/>
        <end position="686"/>
    </location>
</feature>
<feature type="topological domain" description="Cytoplasmic" evidence="16">
    <location>
        <begin position="1"/>
        <end position="351"/>
    </location>
</feature>
<feature type="transmembrane region" description="Helical; Name=Segment S1" evidence="16">
    <location>
        <begin position="352"/>
        <end position="373"/>
    </location>
</feature>
<feature type="topological domain" description="Extracellular" evidence="16">
    <location>
        <begin position="374"/>
        <end position="382"/>
    </location>
</feature>
<feature type="transmembrane region" description="Helical; Name=Segment S2" evidence="16">
    <location>
        <begin position="383"/>
        <end position="404"/>
    </location>
</feature>
<feature type="topological domain" description="Cytoplasmic" evidence="16">
    <location>
        <begin position="405"/>
        <end position="412"/>
    </location>
</feature>
<feature type="transmembrane region" description="Helical; Name=Segment S3" evidence="16">
    <location>
        <begin position="413"/>
        <end position="435"/>
    </location>
</feature>
<feature type="topological domain" description="Extracellular" evidence="16">
    <location>
        <begin position="436"/>
        <end position="446"/>
    </location>
</feature>
<feature type="transmembrane region" description="Helical; Name=Segment S4" evidence="16">
    <location>
        <begin position="447"/>
        <end position="469"/>
    </location>
</feature>
<feature type="topological domain" description="Cytoplasmic" evidence="16">
    <location>
        <begin position="470"/>
        <end position="487"/>
    </location>
</feature>
<feature type="transmembrane region" description="Helical; Name=Segment S5" evidence="16">
    <location>
        <begin position="488"/>
        <end position="510"/>
    </location>
</feature>
<feature type="topological domain" description="Extracellular" evidence="16">
    <location>
        <begin position="511"/>
        <end position="521"/>
    </location>
</feature>
<feature type="intramembrane region" description="Helical; Pore-forming" evidence="16">
    <location>
        <begin position="522"/>
        <end position="534"/>
    </location>
</feature>
<feature type="topological domain" description="Extracellular" evidence="16">
    <location>
        <begin position="535"/>
        <end position="551"/>
    </location>
</feature>
<feature type="transmembrane region" description="Helical; Name=Segment S6" evidence="16">
    <location>
        <begin position="552"/>
        <end position="577"/>
    </location>
</feature>
<feature type="topological domain" description="Cytoplasmic" evidence="16">
    <location>
        <begin position="578"/>
        <end position="686"/>
    </location>
</feature>
<feature type="region of interest" description="Disordered" evidence="2">
    <location>
        <begin position="1"/>
        <end position="57"/>
    </location>
</feature>
<feature type="region of interest" description="Disordered" evidence="2">
    <location>
        <begin position="97"/>
        <end position="177"/>
    </location>
</feature>
<feature type="region of interest" description="Disordered" evidence="2">
    <location>
        <begin position="207"/>
        <end position="271"/>
    </location>
</feature>
<feature type="region of interest" description="Disordered" evidence="2">
    <location>
        <begin position="289"/>
        <end position="318"/>
    </location>
</feature>
<feature type="compositionally biased region" description="Basic and acidic residues" evidence="2">
    <location>
        <begin position="1"/>
        <end position="15"/>
    </location>
</feature>
<feature type="compositionally biased region" description="Basic residues" evidence="2">
    <location>
        <begin position="25"/>
        <end position="35"/>
    </location>
</feature>
<feature type="compositionally biased region" description="Basic and acidic residues" evidence="2">
    <location>
        <begin position="128"/>
        <end position="142"/>
    </location>
</feature>
<feature type="compositionally biased region" description="Polar residues" evidence="2">
    <location>
        <begin position="147"/>
        <end position="160"/>
    </location>
</feature>
<feature type="compositionally biased region" description="Basic residues" evidence="2">
    <location>
        <begin position="211"/>
        <end position="229"/>
    </location>
</feature>
<feature type="compositionally biased region" description="Basic residues" evidence="2">
    <location>
        <begin position="235"/>
        <end position="244"/>
    </location>
</feature>
<feature type="compositionally biased region" description="Polar residues" evidence="2">
    <location>
        <begin position="245"/>
        <end position="271"/>
    </location>
</feature>
<feature type="compositionally biased region" description="Basic residues" evidence="2">
    <location>
        <begin position="308"/>
        <end position="318"/>
    </location>
</feature>
<feature type="sequence variant" description="In strain: 72.">
    <original>S</original>
    <variation>SHP</variation>
    <location>
        <position position="25"/>
    </location>
</feature>
<feature type="sequence variant" description="In strain: 2, 47 and 58." evidence="6">
    <original>M</original>
    <variation>R</variation>
    <location>
        <position position="52"/>
    </location>
</feature>
<feature type="sequence variant" description="In strain: 47." evidence="6">
    <location>
        <position position="160"/>
    </location>
</feature>
<feature type="sequence variant" description="In strain: 72." evidence="6">
    <original>T</original>
    <variation>I</variation>
    <location>
        <position position="270"/>
    </location>
</feature>
<feature type="sequence variant" description="In strain: 72." evidence="6">
    <original>Y</original>
    <variation>S</variation>
    <location>
        <position position="276"/>
    </location>
</feature>
<feature type="helix" evidence="20">
    <location>
        <begin position="340"/>
        <end position="348"/>
    </location>
</feature>
<feature type="helix" evidence="20">
    <location>
        <begin position="353"/>
        <end position="370"/>
    </location>
</feature>
<feature type="strand" evidence="20">
    <location>
        <begin position="373"/>
        <end position="376"/>
    </location>
</feature>
<feature type="turn" evidence="20">
    <location>
        <begin position="377"/>
        <end position="380"/>
    </location>
</feature>
<feature type="helix" evidence="20">
    <location>
        <begin position="381"/>
        <end position="412"/>
    </location>
</feature>
<feature type="helix" evidence="20">
    <location>
        <begin position="414"/>
        <end position="434"/>
    </location>
</feature>
<feature type="helix" evidence="20">
    <location>
        <begin position="440"/>
        <end position="443"/>
    </location>
</feature>
<feature type="helix" evidence="20">
    <location>
        <begin position="446"/>
        <end position="456"/>
    </location>
</feature>
<feature type="helix" evidence="20">
    <location>
        <begin position="457"/>
        <end position="460"/>
    </location>
</feature>
<feature type="helix" evidence="20">
    <location>
        <begin position="461"/>
        <end position="469"/>
    </location>
</feature>
<feature type="turn" evidence="20">
    <location>
        <begin position="472"/>
        <end position="475"/>
    </location>
</feature>
<feature type="helix" evidence="20">
    <location>
        <begin position="476"/>
        <end position="510"/>
    </location>
</feature>
<feature type="helix" evidence="20">
    <location>
        <begin position="516"/>
        <end position="519"/>
    </location>
</feature>
<feature type="helix" evidence="20">
    <location>
        <begin position="522"/>
        <end position="532"/>
    </location>
</feature>
<feature type="turn" evidence="20">
    <location>
        <begin position="533"/>
        <end position="535"/>
    </location>
</feature>
<feature type="helix" evidence="20">
    <location>
        <begin position="538"/>
        <end position="548"/>
    </location>
</feature>
<feature type="helix" evidence="20">
    <location>
        <begin position="553"/>
        <end position="567"/>
    </location>
</feature>
<feature type="helix" evidence="20">
    <location>
        <begin position="569"/>
        <end position="593"/>
    </location>
</feature>
<comment type="function">
    <text evidence="3 4 7 8 9">Pore-forming subunit of the CatSper complex, a sperm-specific voltage-gated calcium channel that plays a central role in sperm cell hyperactivation. Controls calcium entry to mediate the hyperactivated motility, a step needed for sperm motility which is essential late in the preparation of sperm for fertilization.</text>
</comment>
<comment type="catalytic activity">
    <reaction evidence="4 19">
        <text>Ca(2+)(in) = Ca(2+)(out)</text>
        <dbReference type="Rhea" id="RHEA:29671"/>
        <dbReference type="ChEBI" id="CHEBI:29108"/>
    </reaction>
</comment>
<comment type="activity regulation">
    <text evidence="1 15">Activated by intracellular alkalinization (By similarity). In contrast to the human ortholog, not activated by progesterone (PubMed:21412339).</text>
</comment>
<comment type="subunit">
    <text evidence="1 10 12 13 14 16 17">Component of the CatSper complex or CatSpermasome composed of the core pore-forming members CATSPER1, CATSPER2, CATSPER3 and CATSPER4 as well as auxiliary members CATSPERB, CATSPERG2, CATSPERD, CATSPERE, CATSPERZ, C2CD6/CATSPERT, SLCO6C1, TMEM249, TMEM262 and EFCAB9 (PubMed:17227845, PubMed:17478420, PubMed:19516020, PubMed:21224844, PubMed:34225353, PubMed:34998468). HSPA1 may be an additional auxiliary complex member (PubMed:17478420, PubMed:19516020). The core complex members CATSPER1, CATSPER2, CATSPER3 and CATSPER4 form a heterotetrameric channel (PubMed:34225353). The auxiliary CATSPERB, CATSPERG2, CATSPERD and CATSPERE subunits form a pavilion-like structure over the pore which stabilizes the complex through interactions with CATSPER4, CATSPER3, CATSPER1 and CATSPER2 respectively (PubMed:34225353). SLCO6C1 interacts with CATSPERE, and TMEM262/CATSPERH interacts with CATSPERB, further stabilizing the complex (PubMed:34225353). C2CD6/CATSPERT interacts at least with CATSPERD and is required for targeting the CatSper complex in the flagellar membrane (PubMed:34998468). Interacts with Ca(v)3.3/CACNA1I, leading to suppression of T-type calcium channel activity (By similarity).</text>
</comment>
<comment type="interaction">
    <interactant intactId="EBI-15619083">
        <id>Q91ZR5</id>
    </interactant>
    <interactant intactId="EBI-15619135">
        <id>Q80W99</id>
        <label>Catsper3</label>
    </interactant>
    <organismsDiffer>false</organismsDiffer>
    <experiments>2</experiments>
</comment>
<comment type="interaction">
    <interactant intactId="EBI-15619083">
        <id>Q91ZR5</id>
    </interactant>
    <interactant intactId="EBI-15619199">
        <id>Q8BVN3</id>
        <label>Catsper4</label>
    </interactant>
    <organismsDiffer>false</organismsDiffer>
    <experiments>2</experiments>
</comment>
<comment type="subcellular location">
    <subcellularLocation>
        <location evidence="3 17">Cell projection</location>
        <location evidence="3 17">Cilium</location>
        <location evidence="3 17">Flagellum membrane</location>
        <topology evidence="16">Multi-pass membrane protein</topology>
    </subcellularLocation>
    <text evidence="16 17">Specifically located in the principal piece of the sperm tail.</text>
</comment>
<comment type="tissue specificity">
    <text evidence="3">Testis-specific.</text>
</comment>
<comment type="developmental stage">
    <text evidence="5 11">Detected only after round spermatids are produced approximately at day 18.</text>
</comment>
<comment type="disruption phenotype">
    <text evidence="3 7">Mice are normal but males are sterile. Male sterility is due to defects in sperm motility unability to fertilize intact eggs (PubMed:11595941). Sperm of the CatSper1 null mutant lack CatSper2 protein, while sperm of the CatSper2 null mutant, lack CatSper1 protein, suggesting that stable expression of CatSper1 protein requires CatSper2 and vice versa (PubMed:16036917).</text>
</comment>
<comment type="similarity">
    <text evidence="18">Belongs to the cation channel sperm-associated (TC 1.A.1.19) family.</text>
</comment>
<organism>
    <name type="scientific">Mus musculus</name>
    <name type="common">Mouse</name>
    <dbReference type="NCBI Taxonomy" id="10090"/>
    <lineage>
        <taxon>Eukaryota</taxon>
        <taxon>Metazoa</taxon>
        <taxon>Chordata</taxon>
        <taxon>Craniata</taxon>
        <taxon>Vertebrata</taxon>
        <taxon>Euteleostomi</taxon>
        <taxon>Mammalia</taxon>
        <taxon>Eutheria</taxon>
        <taxon>Euarchontoglires</taxon>
        <taxon>Glires</taxon>
        <taxon>Rodentia</taxon>
        <taxon>Myomorpha</taxon>
        <taxon>Muroidea</taxon>
        <taxon>Muridae</taxon>
        <taxon>Murinae</taxon>
        <taxon>Mus</taxon>
        <taxon>Mus</taxon>
    </lineage>
</organism>
<protein>
    <recommendedName>
        <fullName>Cation channel sperm-associated protein 1</fullName>
        <shortName>CatSper1</shortName>
    </recommendedName>
</protein>
<reference key="1">
    <citation type="journal article" date="2001" name="Nature">
        <title>A sperm ion channel required for sperm motility and male fertility.</title>
        <authorList>
            <person name="Ren D."/>
            <person name="Navarro B."/>
            <person name="Perez G."/>
            <person name="Jackson A.C."/>
            <person name="Hsu S."/>
            <person name="Shi Q."/>
            <person name="Tilly J.L."/>
            <person name="Clapham D.E."/>
        </authorList>
    </citation>
    <scope>NUCLEOTIDE SEQUENCE [MRNA]</scope>
    <scope>FUNCTION</scope>
    <scope>TRANSPORTER ACTIVITY</scope>
    <scope>SUBCELLULAR LOCATION</scope>
    <scope>TOPOLOGY</scope>
    <scope>TISSUE SPECIFICITY</scope>
    <scope>DISRUPTION PHENOTYPE</scope>
</reference>
<reference key="2">
    <citation type="journal article" date="2005" name="Mol. Biol. Evol.">
        <title>Positive selection for indel substitutions in the rodent sperm protein catsper1.</title>
        <authorList>
            <person name="Podlaha O."/>
            <person name="Webb D.M."/>
            <person name="Tucker P.K."/>
            <person name="Zhang J."/>
        </authorList>
    </citation>
    <scope>NUCLEOTIDE SEQUENCE [GENOMIC DNA] OF 19-307</scope>
    <scope>VARIANTS HIS-PRO-25 INS; ARG-52; GLN-160 DEL; ILE-270 AND SER-276</scope>
    <source>
        <strain>2</strain>
        <strain>35</strain>
        <strain>41</strain>
        <strain>47</strain>
        <strain>49</strain>
        <strain>51</strain>
        <strain>58</strain>
        <strain>61</strain>
        <strain>63</strain>
        <strain>72</strain>
    </source>
</reference>
<reference key="3">
    <citation type="journal article" date="2003" name="Proc. Natl. Acad. Sci. U.S.A.">
        <title>CatSper1 required for evoked Ca2+ entry and control of flagellar function in sperm.</title>
        <authorList>
            <person name="Carlson A.E."/>
            <person name="Westenbroek R.E."/>
            <person name="Quill T."/>
            <person name="Ren D."/>
            <person name="Clapham D.E."/>
            <person name="Hille B."/>
            <person name="Garbers D.L."/>
            <person name="Babcock D.F."/>
        </authorList>
    </citation>
    <scope>FUNCTION</scope>
    <scope>TRANSPORTER ACTIVITY</scope>
</reference>
<reference key="4">
    <citation type="journal article" date="2004" name="Hum. Reprod.">
        <title>CatSper gene expression in postnatal development of mouse testis and in subfertile men with deficient sperm motility.</title>
        <authorList>
            <person name="Nikpoor P."/>
            <person name="Mowla S.J."/>
            <person name="Movahedin M."/>
            <person name="Ziaee S.A.-M."/>
            <person name="Tiraihi T."/>
        </authorList>
    </citation>
    <scope>DEVELOPMENTAL STAGE</scope>
</reference>
<reference key="5">
    <citation type="journal article" date="2005" name="J. Biol. Chem.">
        <title>Identical phenotypes of CatSper1 and CatSper2 null sperm.</title>
        <authorList>
            <person name="Carlson A.E."/>
            <person name="Quill T.A."/>
            <person name="Westenbroek R.E."/>
            <person name="Schuh S.M."/>
            <person name="Hille B."/>
            <person name="Babcock D.F."/>
        </authorList>
    </citation>
    <scope>FUNCTION</scope>
    <scope>DISRUPTION PHENOTYPE</scope>
</reference>
<reference key="6">
    <citation type="journal article" date="2006" name="Nature">
        <title>Whole-cell patch-clamp measurements of spermatozoa reveal an alkaline-activated Ca2+ channel.</title>
        <authorList>
            <person name="Kirichok Y."/>
            <person name="Navarro B."/>
            <person name="Clapham D.E."/>
        </authorList>
    </citation>
    <scope>FUNCTION</scope>
</reference>
<reference key="7">
    <citation type="journal article" date="2007" name="Dev. Biol.">
        <title>Contributions of extracellular and intracellular Ca2+ to regulation of sperm motility: release of intracellular stores can hyperactivate CatSper1 and CatSper2 null sperm.</title>
        <authorList>
            <person name="Marquez B."/>
            <person name="Ignotz G."/>
            <person name="Suarez S.S."/>
        </authorList>
    </citation>
    <scope>FUNCTION</scope>
</reference>
<reference key="8">
    <citation type="journal article" date="2007" name="J. Biol. Chem.">
        <title>CatSperbeta, a novel transmembrane protein in the CatSper channel complex.</title>
        <authorList>
            <person name="Liu J."/>
            <person name="Xia J."/>
            <person name="Cho K.-H."/>
            <person name="Clapham D.E."/>
            <person name="Ren D."/>
        </authorList>
    </citation>
    <scope>IDENTIFICATION IN A COMPLEX WITH CATSPERB AND HSPA1B</scope>
</reference>
<reference key="9">
    <citation type="journal article" date="2007" name="Mol. Hum. Reprod.">
        <title>Expression of CatSper family transcripts in the mouse testis during post-natal development and human ejaculated spermatozoa: relationship to sperm motility.</title>
        <authorList>
            <person name="Li H.-G."/>
            <person name="Ding X.-F."/>
            <person name="Liao A.-H."/>
            <person name="Kong X.-B."/>
            <person name="Xiong C.-L."/>
        </authorList>
    </citation>
    <scope>DEVELOPMENTAL STAGE</scope>
</reference>
<reference key="10">
    <citation type="journal article" date="2007" name="Proc. Natl. Acad. Sci. U.S.A.">
        <title>All four CatSper ion channel proteins are required for male fertility and sperm cell hyperactivated motility.</title>
        <authorList>
            <person name="Qi H."/>
            <person name="Moran M.M."/>
            <person name="Navarro B."/>
            <person name="Chong J.A."/>
            <person name="Krapivinsky G."/>
            <person name="Krapivinsky L."/>
            <person name="Kirichok Y."/>
            <person name="Ramsey I.S."/>
            <person name="Quill T.A."/>
            <person name="Clapham D.E."/>
        </authorList>
    </citation>
    <scope>INTERACTION WITH CATSPER3 AND CATSPER4</scope>
</reference>
<reference key="11">
    <citation type="journal article" date="2009" name="Biol. Reprod.">
        <title>A novel, single, transmembrane protein CATSPERG is associated with CATSPER1 channel protein.</title>
        <authorList>
            <person name="Wang H."/>
            <person name="Liu J."/>
            <person name="Cho K.-H."/>
            <person name="Ren D."/>
        </authorList>
    </citation>
    <scope>IDENTIFICATION IN A COMPLEX WITH CATSPERB; CATSPERG2 AND HSPA1B</scope>
</reference>
<reference key="12">
    <citation type="journal article" date="2011" name="Nature">
        <title>Progesterone activates the principal Ca2+ channel of human sperm.</title>
        <authorList>
            <person name="Lishko P.V."/>
            <person name="Botchkina I.L."/>
            <person name="Kirichok Y."/>
        </authorList>
    </citation>
    <scope>LACK OF ACTIVATION BY PROGESTERONE AND PGE1</scope>
</reference>
<reference key="13">
    <citation type="journal article" date="2011" name="Nat. Commun.">
        <title>A novel gene required for male fertility and functional CATSPER channel formation in spermatozoa.</title>
        <authorList>
            <person name="Chung J.J."/>
            <person name="Navarro B."/>
            <person name="Krapivinsky G."/>
            <person name="Krapivinsky L."/>
            <person name="Clapham D.E."/>
        </authorList>
    </citation>
    <scope>IDENTIFICATION IN THE CATSPER COMPLEX</scope>
    <source>
        <strain>C57BL/6J</strain>
    </source>
</reference>
<reference key="14">
    <citation type="journal article" date="2022" name="Cell Rep.">
        <title>C2cd6-encoded CatSpertau targets sperm calcium channel to Ca2+ signaling domains in the flagellar membrane.</title>
        <authorList>
            <person name="Hwang J.Y."/>
            <person name="Wang H."/>
            <person name="Lu Y."/>
            <person name="Ikawa M."/>
            <person name="Chung J.J."/>
        </authorList>
    </citation>
    <scope>IDENTIFICATION IN THE CATSPER COMPLEX</scope>
    <scope>SUBCELLULAR LOCATION</scope>
</reference>
<reference key="15">
    <citation type="journal article" date="2021" name="Nature">
        <title>Structure of a mammalian sperm cation channel complex.</title>
        <authorList>
            <person name="Lin S."/>
            <person name="Ke M."/>
            <person name="Zhang Y."/>
            <person name="Yan Z."/>
            <person name="Wu J."/>
        </authorList>
    </citation>
    <scope>STRUCTURE BY ELECTRON MICROSCOPY (2.9 ANGSTROMS) OF THE CATSPER COMPLEX</scope>
    <scope>IDENTIFICATION BY MASS SPECTROMETRY</scope>
    <scope>SUBCELLULAR LOCATION</scope>
    <scope>TRANSMEMBRANE DOMAINS</scope>
    <scope>TOPOLOGY</scope>
</reference>
<keyword id="KW-0002">3D-structure</keyword>
<keyword id="KW-0106">Calcium</keyword>
<keyword id="KW-0107">Calcium channel</keyword>
<keyword id="KW-0109">Calcium transport</keyword>
<keyword id="KW-1003">Cell membrane</keyword>
<keyword id="KW-0966">Cell projection</keyword>
<keyword id="KW-0969">Cilium</keyword>
<keyword id="KW-0217">Developmental protein</keyword>
<keyword id="KW-0221">Differentiation</keyword>
<keyword id="KW-0282">Flagellum</keyword>
<keyword id="KW-0407">Ion channel</keyword>
<keyword id="KW-0406">Ion transport</keyword>
<keyword id="KW-0472">Membrane</keyword>
<keyword id="KW-1185">Reference proteome</keyword>
<keyword id="KW-0744">Spermatogenesis</keyword>
<keyword id="KW-0812">Transmembrane</keyword>
<keyword id="KW-1133">Transmembrane helix</keyword>
<keyword id="KW-0813">Transport</keyword>
<keyword id="KW-0851">Voltage-gated channel</keyword>
<gene>
    <name type="primary">Catsper1</name>
</gene>
<proteinExistence type="evidence at protein level"/>